<dbReference type="EC" id="7.1.1.-" evidence="1"/>
<dbReference type="EMBL" id="CP000117">
    <property type="protein sequence ID" value="ABA19929.1"/>
    <property type="molecule type" value="Genomic_DNA"/>
</dbReference>
<dbReference type="RefSeq" id="WP_010995900.1">
    <property type="nucleotide sequence ID" value="NC_007413.1"/>
</dbReference>
<dbReference type="SMR" id="Q3MGF7"/>
<dbReference type="STRING" id="240292.Ava_0303"/>
<dbReference type="KEGG" id="ava:Ava_0303"/>
<dbReference type="eggNOG" id="ENOG5031AQM">
    <property type="taxonomic scope" value="Bacteria"/>
</dbReference>
<dbReference type="HOGENOM" id="CLU_137431_0_0_3"/>
<dbReference type="Proteomes" id="UP000002533">
    <property type="component" value="Chromosome"/>
</dbReference>
<dbReference type="GO" id="GO:0031676">
    <property type="term" value="C:plasma membrane-derived thylakoid membrane"/>
    <property type="evidence" value="ECO:0007669"/>
    <property type="project" value="UniProtKB-SubCell"/>
</dbReference>
<dbReference type="GO" id="GO:0016655">
    <property type="term" value="F:oxidoreductase activity, acting on NAD(P)H, quinone or similar compound as acceptor"/>
    <property type="evidence" value="ECO:0007669"/>
    <property type="project" value="UniProtKB-UniRule"/>
</dbReference>
<dbReference type="GO" id="GO:0048038">
    <property type="term" value="F:quinone binding"/>
    <property type="evidence" value="ECO:0007669"/>
    <property type="project" value="UniProtKB-KW"/>
</dbReference>
<dbReference type="HAMAP" id="MF_01352">
    <property type="entry name" value="NDH1_NDH1M"/>
    <property type="match status" value="1"/>
</dbReference>
<dbReference type="InterPro" id="IPR018922">
    <property type="entry name" value="NdhM"/>
</dbReference>
<dbReference type="PANTHER" id="PTHR36900">
    <property type="entry name" value="NAD(P)H-QUINONE OXIDOREDUCTASE SUBUNIT M, CHLOROPLASTIC"/>
    <property type="match status" value="1"/>
</dbReference>
<dbReference type="PANTHER" id="PTHR36900:SF1">
    <property type="entry name" value="NAD(P)H-QUINONE OXIDOREDUCTASE SUBUNIT M, CHLOROPLASTIC"/>
    <property type="match status" value="1"/>
</dbReference>
<dbReference type="Pfam" id="PF10664">
    <property type="entry name" value="NdhM"/>
    <property type="match status" value="1"/>
</dbReference>
<keyword id="KW-0472">Membrane</keyword>
<keyword id="KW-0520">NAD</keyword>
<keyword id="KW-0521">NADP</keyword>
<keyword id="KW-0618">Plastoquinone</keyword>
<keyword id="KW-0874">Quinone</keyword>
<keyword id="KW-0793">Thylakoid</keyword>
<keyword id="KW-1278">Translocase</keyword>
<keyword id="KW-0813">Transport</keyword>
<evidence type="ECO:0000255" key="1">
    <source>
        <dbReference type="HAMAP-Rule" id="MF_01352"/>
    </source>
</evidence>
<protein>
    <recommendedName>
        <fullName evidence="1">NAD(P)H-quinone oxidoreductase subunit M</fullName>
        <ecNumber evidence="1">7.1.1.-</ecNumber>
    </recommendedName>
    <alternativeName>
        <fullName evidence="1">NAD(P)H dehydrogenase I subunit M</fullName>
        <shortName evidence="1">NDH-1 subunit M</shortName>
        <shortName evidence="1">NDH-M</shortName>
    </alternativeName>
</protein>
<reference key="1">
    <citation type="journal article" date="2014" name="Stand. Genomic Sci.">
        <title>Complete genome sequence of Anabaena variabilis ATCC 29413.</title>
        <authorList>
            <person name="Thiel T."/>
            <person name="Pratte B.S."/>
            <person name="Zhong J."/>
            <person name="Goodwin L."/>
            <person name="Copeland A."/>
            <person name="Lucas S."/>
            <person name="Han C."/>
            <person name="Pitluck S."/>
            <person name="Land M.L."/>
            <person name="Kyrpides N.C."/>
            <person name="Woyke T."/>
        </authorList>
    </citation>
    <scope>NUCLEOTIDE SEQUENCE [LARGE SCALE GENOMIC DNA]</scope>
    <source>
        <strain>ATCC 29413 / PCC 7937</strain>
    </source>
</reference>
<organism>
    <name type="scientific">Trichormus variabilis (strain ATCC 29413 / PCC 7937)</name>
    <name type="common">Anabaena variabilis</name>
    <dbReference type="NCBI Taxonomy" id="240292"/>
    <lineage>
        <taxon>Bacteria</taxon>
        <taxon>Bacillati</taxon>
        <taxon>Cyanobacteriota</taxon>
        <taxon>Cyanophyceae</taxon>
        <taxon>Nostocales</taxon>
        <taxon>Nostocaceae</taxon>
        <taxon>Trichormus</taxon>
    </lineage>
</organism>
<proteinExistence type="inferred from homology"/>
<sequence>MENATLLKSTTRHIRIFAAEIDRDGELVPSNQVLTLDIDPDNEFNWNEDALQKIYRKFDELVEASSGADLTDYNLRRIGSDLEHYLRSLLQKGEISYNLSARVTNYSLGLPQVAVEDK</sequence>
<gene>
    <name evidence="1" type="primary">ndhM</name>
    <name type="ordered locus">Ava_0303</name>
</gene>
<name>NDHM_TRIV2</name>
<accession>Q3MGF7</accession>
<comment type="function">
    <text evidence="1">NDH-1 shuttles electrons from an unknown electron donor, via FMN and iron-sulfur (Fe-S) centers, to quinones in the respiratory and/or the photosynthetic chain. The immediate electron acceptor for the enzyme in this species is believed to be plastoquinone. Couples the redox reaction to proton translocation, and thus conserves the redox energy in a proton gradient. Cyanobacterial NDH-1 also plays a role in inorganic carbon-concentration.</text>
</comment>
<comment type="catalytic activity">
    <reaction evidence="1">
        <text>a plastoquinone + NADH + (n+1) H(+)(in) = a plastoquinol + NAD(+) + n H(+)(out)</text>
        <dbReference type="Rhea" id="RHEA:42608"/>
        <dbReference type="Rhea" id="RHEA-COMP:9561"/>
        <dbReference type="Rhea" id="RHEA-COMP:9562"/>
        <dbReference type="ChEBI" id="CHEBI:15378"/>
        <dbReference type="ChEBI" id="CHEBI:17757"/>
        <dbReference type="ChEBI" id="CHEBI:57540"/>
        <dbReference type="ChEBI" id="CHEBI:57945"/>
        <dbReference type="ChEBI" id="CHEBI:62192"/>
    </reaction>
</comment>
<comment type="catalytic activity">
    <reaction evidence="1">
        <text>a plastoquinone + NADPH + (n+1) H(+)(in) = a plastoquinol + NADP(+) + n H(+)(out)</text>
        <dbReference type="Rhea" id="RHEA:42612"/>
        <dbReference type="Rhea" id="RHEA-COMP:9561"/>
        <dbReference type="Rhea" id="RHEA-COMP:9562"/>
        <dbReference type="ChEBI" id="CHEBI:15378"/>
        <dbReference type="ChEBI" id="CHEBI:17757"/>
        <dbReference type="ChEBI" id="CHEBI:57783"/>
        <dbReference type="ChEBI" id="CHEBI:58349"/>
        <dbReference type="ChEBI" id="CHEBI:62192"/>
    </reaction>
</comment>
<comment type="subunit">
    <text evidence="1">NDH-1 can be composed of about 15 different subunits; different subcomplexes with different compositions have been identified which probably have different functions.</text>
</comment>
<comment type="subcellular location">
    <subcellularLocation>
        <location evidence="1">Cellular thylakoid membrane</location>
        <topology evidence="1">Peripheral membrane protein</topology>
        <orientation evidence="1">Cytoplasmic side</orientation>
    </subcellularLocation>
</comment>
<comment type="similarity">
    <text evidence="1">Belongs to the complex I NdhM subunit family.</text>
</comment>
<feature type="chain" id="PRO_0000352180" description="NAD(P)H-quinone oxidoreductase subunit M">
    <location>
        <begin position="1"/>
        <end position="118"/>
    </location>
</feature>